<accession>Q0ZIZ1</accession>
<geneLocation type="chloroplast"/>
<name>PSBN_VITVI</name>
<keyword id="KW-0150">Chloroplast</keyword>
<keyword id="KW-0472">Membrane</keyword>
<keyword id="KW-0934">Plastid</keyword>
<keyword id="KW-1185">Reference proteome</keyword>
<keyword id="KW-0793">Thylakoid</keyword>
<keyword id="KW-0812">Transmembrane</keyword>
<keyword id="KW-1133">Transmembrane helix</keyword>
<protein>
    <recommendedName>
        <fullName evidence="1">Protein PsbN</fullName>
    </recommendedName>
</protein>
<reference key="1">
    <citation type="journal article" date="2006" name="BMC Evol. Biol.">
        <title>Phylogenetic analyses of Vitis (Vitaceae) based on complete chloroplast genome sequences: effects of taxon sampling and phylogenetic methods on resolving relationships among rosids.</title>
        <authorList>
            <person name="Jansen R.K."/>
            <person name="Kaittanis C."/>
            <person name="Lee S.-B."/>
            <person name="Saski C."/>
            <person name="Tomkins J."/>
            <person name="Alverson A.J."/>
            <person name="Daniell H."/>
        </authorList>
    </citation>
    <scope>NUCLEOTIDE SEQUENCE [LARGE SCALE GENOMIC DNA]</scope>
    <source>
        <strain>cv. Maxxa</strain>
    </source>
</reference>
<gene>
    <name evidence="1" type="primary">psbN</name>
</gene>
<evidence type="ECO:0000255" key="1">
    <source>
        <dbReference type="HAMAP-Rule" id="MF_00293"/>
    </source>
</evidence>
<feature type="chain" id="PRO_0000276283" description="Protein PsbN">
    <location>
        <begin position="1"/>
        <end position="43"/>
    </location>
</feature>
<feature type="transmembrane region" description="Helical" evidence="1">
    <location>
        <begin position="5"/>
        <end position="27"/>
    </location>
</feature>
<sequence>METATLVAISISGLLVSFTGYALYTAFGQPSQQLRDPFEEHGD</sequence>
<proteinExistence type="inferred from homology"/>
<comment type="function">
    <text evidence="1">May play a role in photosystem I and II biogenesis.</text>
</comment>
<comment type="subcellular location">
    <subcellularLocation>
        <location evidence="1">Plastid</location>
        <location evidence="1">Chloroplast thylakoid membrane</location>
        <topology evidence="1">Single-pass membrane protein</topology>
    </subcellularLocation>
</comment>
<comment type="similarity">
    <text evidence="1">Belongs to the PsbN family.</text>
</comment>
<comment type="caution">
    <text evidence="1">Originally thought to be a component of PSII; based on experiments in Synechocystis, N.tabacum and barley, and its absence from PSII in T.elongatus and T.vulcanus, this is probably not true.</text>
</comment>
<dbReference type="EMBL" id="DQ424856">
    <property type="protein sequence ID" value="ABE47561.1"/>
    <property type="molecule type" value="Genomic_DNA"/>
</dbReference>
<dbReference type="RefSeq" id="YP_567105.1">
    <property type="nucleotide sequence ID" value="NC_007957.1"/>
</dbReference>
<dbReference type="SMR" id="Q0ZIZ1"/>
<dbReference type="FunCoup" id="Q0ZIZ1">
    <property type="interactions" value="48"/>
</dbReference>
<dbReference type="STRING" id="29760.Q0ZIZ1"/>
<dbReference type="PaxDb" id="29760-VIT_00s0505g00060.t01"/>
<dbReference type="GeneID" id="4025127"/>
<dbReference type="KEGG" id="vvi:4025127"/>
<dbReference type="eggNOG" id="ENOG502S8EW">
    <property type="taxonomic scope" value="Eukaryota"/>
</dbReference>
<dbReference type="InParanoid" id="Q0ZIZ1"/>
<dbReference type="OrthoDB" id="3727at71240"/>
<dbReference type="Proteomes" id="UP000009183">
    <property type="component" value="Chloroplast"/>
</dbReference>
<dbReference type="ExpressionAtlas" id="Q0ZIZ1">
    <property type="expression patterns" value="baseline and differential"/>
</dbReference>
<dbReference type="GO" id="GO:0009535">
    <property type="term" value="C:chloroplast thylakoid membrane"/>
    <property type="evidence" value="ECO:0007669"/>
    <property type="project" value="UniProtKB-SubCell"/>
</dbReference>
<dbReference type="GO" id="GO:0015979">
    <property type="term" value="P:photosynthesis"/>
    <property type="evidence" value="ECO:0007669"/>
    <property type="project" value="InterPro"/>
</dbReference>
<dbReference type="HAMAP" id="MF_00293">
    <property type="entry name" value="PSII_PsbN"/>
    <property type="match status" value="1"/>
</dbReference>
<dbReference type="InterPro" id="IPR003398">
    <property type="entry name" value="PSII_PsbN"/>
</dbReference>
<dbReference type="PANTHER" id="PTHR35326">
    <property type="entry name" value="PROTEIN PSBN"/>
    <property type="match status" value="1"/>
</dbReference>
<dbReference type="PANTHER" id="PTHR35326:SF3">
    <property type="entry name" value="PROTEIN PSBN"/>
    <property type="match status" value="1"/>
</dbReference>
<dbReference type="Pfam" id="PF02468">
    <property type="entry name" value="PsbN"/>
    <property type="match status" value="1"/>
</dbReference>
<organism>
    <name type="scientific">Vitis vinifera</name>
    <name type="common">Grape</name>
    <dbReference type="NCBI Taxonomy" id="29760"/>
    <lineage>
        <taxon>Eukaryota</taxon>
        <taxon>Viridiplantae</taxon>
        <taxon>Streptophyta</taxon>
        <taxon>Embryophyta</taxon>
        <taxon>Tracheophyta</taxon>
        <taxon>Spermatophyta</taxon>
        <taxon>Magnoliopsida</taxon>
        <taxon>eudicotyledons</taxon>
        <taxon>Gunneridae</taxon>
        <taxon>Pentapetalae</taxon>
        <taxon>rosids</taxon>
        <taxon>Vitales</taxon>
        <taxon>Vitaceae</taxon>
        <taxon>Viteae</taxon>
        <taxon>Vitis</taxon>
    </lineage>
</organism>